<organism>
    <name type="scientific">Methanocella arvoryzae (strain DSM 22066 / NBRC 105507 / MRE50)</name>
    <dbReference type="NCBI Taxonomy" id="351160"/>
    <lineage>
        <taxon>Archaea</taxon>
        <taxon>Methanobacteriati</taxon>
        <taxon>Methanobacteriota</taxon>
        <taxon>Stenosarchaea group</taxon>
        <taxon>Methanomicrobia</taxon>
        <taxon>Methanocellales</taxon>
        <taxon>Methanocellaceae</taxon>
        <taxon>Methanocella</taxon>
    </lineage>
</organism>
<dbReference type="EC" id="5.4.2.10" evidence="1"/>
<dbReference type="EMBL" id="AM114193">
    <property type="protein sequence ID" value="CAJ36705.1"/>
    <property type="molecule type" value="Genomic_DNA"/>
</dbReference>
<dbReference type="RefSeq" id="WP_012035846.1">
    <property type="nucleotide sequence ID" value="NC_009464.1"/>
</dbReference>
<dbReference type="SMR" id="Q0W4I8"/>
<dbReference type="STRING" id="351160.RCIX1437"/>
<dbReference type="GeneID" id="5143944"/>
<dbReference type="KEGG" id="rci:RCIX1437"/>
<dbReference type="PATRIC" id="fig|351160.9.peg.1563"/>
<dbReference type="eggNOG" id="arCOG00767">
    <property type="taxonomic scope" value="Archaea"/>
</dbReference>
<dbReference type="OrthoDB" id="10363at2157"/>
<dbReference type="Proteomes" id="UP000000663">
    <property type="component" value="Chromosome"/>
</dbReference>
<dbReference type="GO" id="GO:0000287">
    <property type="term" value="F:magnesium ion binding"/>
    <property type="evidence" value="ECO:0007669"/>
    <property type="project" value="UniProtKB-UniRule"/>
</dbReference>
<dbReference type="GO" id="GO:0008966">
    <property type="term" value="F:phosphoglucosamine mutase activity"/>
    <property type="evidence" value="ECO:0007669"/>
    <property type="project" value="UniProtKB-UniRule"/>
</dbReference>
<dbReference type="GO" id="GO:0005975">
    <property type="term" value="P:carbohydrate metabolic process"/>
    <property type="evidence" value="ECO:0007669"/>
    <property type="project" value="InterPro"/>
</dbReference>
<dbReference type="CDD" id="cd03087">
    <property type="entry name" value="PGM_like1"/>
    <property type="match status" value="1"/>
</dbReference>
<dbReference type="FunFam" id="3.40.120.10:FF:000001">
    <property type="entry name" value="Phosphoglucosamine mutase"/>
    <property type="match status" value="1"/>
</dbReference>
<dbReference type="FunFam" id="3.40.120.10:FF:000003">
    <property type="entry name" value="Phosphoglucosamine mutase"/>
    <property type="match status" value="1"/>
</dbReference>
<dbReference type="Gene3D" id="3.40.120.10">
    <property type="entry name" value="Alpha-D-Glucose-1,6-Bisphosphate, subunit A, domain 3"/>
    <property type="match status" value="3"/>
</dbReference>
<dbReference type="Gene3D" id="3.30.310.50">
    <property type="entry name" value="Alpha-D-phosphohexomutase, C-terminal domain"/>
    <property type="match status" value="1"/>
</dbReference>
<dbReference type="HAMAP" id="MF_01554_A">
    <property type="entry name" value="GlmM_A"/>
    <property type="match status" value="1"/>
</dbReference>
<dbReference type="InterPro" id="IPR005844">
    <property type="entry name" value="A-D-PHexomutase_a/b/a-I"/>
</dbReference>
<dbReference type="InterPro" id="IPR016055">
    <property type="entry name" value="A-D-PHexomutase_a/b/a-I/II/III"/>
</dbReference>
<dbReference type="InterPro" id="IPR005845">
    <property type="entry name" value="A-D-PHexomutase_a/b/a-II"/>
</dbReference>
<dbReference type="InterPro" id="IPR005846">
    <property type="entry name" value="A-D-PHexomutase_a/b/a-III"/>
</dbReference>
<dbReference type="InterPro" id="IPR005843">
    <property type="entry name" value="A-D-PHexomutase_C"/>
</dbReference>
<dbReference type="InterPro" id="IPR036900">
    <property type="entry name" value="A-D-PHexomutase_C_sf"/>
</dbReference>
<dbReference type="InterPro" id="IPR016066">
    <property type="entry name" value="A-D-PHexomutase_CS"/>
</dbReference>
<dbReference type="InterPro" id="IPR005841">
    <property type="entry name" value="Alpha-D-phosphohexomutase_SF"/>
</dbReference>
<dbReference type="InterPro" id="IPR023666">
    <property type="entry name" value="GlmM_arc"/>
</dbReference>
<dbReference type="InterPro" id="IPR024086">
    <property type="entry name" value="GlmM_arc-type"/>
</dbReference>
<dbReference type="NCBIfam" id="TIGR03990">
    <property type="entry name" value="Arch_GlmM"/>
    <property type="match status" value="1"/>
</dbReference>
<dbReference type="PANTHER" id="PTHR43771">
    <property type="entry name" value="PHOSPHOMANNOMUTASE"/>
    <property type="match status" value="1"/>
</dbReference>
<dbReference type="PANTHER" id="PTHR43771:SF1">
    <property type="entry name" value="PHOSPHOMANNOMUTASE"/>
    <property type="match status" value="1"/>
</dbReference>
<dbReference type="Pfam" id="PF02878">
    <property type="entry name" value="PGM_PMM_I"/>
    <property type="match status" value="1"/>
</dbReference>
<dbReference type="Pfam" id="PF02879">
    <property type="entry name" value="PGM_PMM_II"/>
    <property type="match status" value="1"/>
</dbReference>
<dbReference type="Pfam" id="PF02880">
    <property type="entry name" value="PGM_PMM_III"/>
    <property type="match status" value="1"/>
</dbReference>
<dbReference type="Pfam" id="PF00408">
    <property type="entry name" value="PGM_PMM_IV"/>
    <property type="match status" value="1"/>
</dbReference>
<dbReference type="PRINTS" id="PR00509">
    <property type="entry name" value="PGMPMM"/>
</dbReference>
<dbReference type="SUPFAM" id="SSF55957">
    <property type="entry name" value="Phosphoglucomutase, C-terminal domain"/>
    <property type="match status" value="1"/>
</dbReference>
<dbReference type="SUPFAM" id="SSF53738">
    <property type="entry name" value="Phosphoglucomutase, first 3 domains"/>
    <property type="match status" value="3"/>
</dbReference>
<dbReference type="PROSITE" id="PS00710">
    <property type="entry name" value="PGM_PMM"/>
    <property type="match status" value="1"/>
</dbReference>
<comment type="function">
    <text evidence="1">Catalyzes the conversion of glucosamine-6-phosphate to glucosamine-1-phosphate.</text>
</comment>
<comment type="catalytic activity">
    <reaction evidence="1">
        <text>alpha-D-glucosamine 1-phosphate = D-glucosamine 6-phosphate</text>
        <dbReference type="Rhea" id="RHEA:23424"/>
        <dbReference type="ChEBI" id="CHEBI:58516"/>
        <dbReference type="ChEBI" id="CHEBI:58725"/>
        <dbReference type="EC" id="5.4.2.10"/>
    </reaction>
</comment>
<comment type="cofactor">
    <cofactor evidence="1">
        <name>Mg(2+)</name>
        <dbReference type="ChEBI" id="CHEBI:18420"/>
    </cofactor>
    <text evidence="1">Binds 1 Mg(2+) ion per subunit.</text>
</comment>
<comment type="PTM">
    <text evidence="1">Activated by phosphorylation.</text>
</comment>
<comment type="similarity">
    <text evidence="1">Belongs to the phosphohexose mutase family.</text>
</comment>
<protein>
    <recommendedName>
        <fullName evidence="1">Probable phosphoglucosamine mutase</fullName>
        <ecNumber evidence="1">5.4.2.10</ecNumber>
    </recommendedName>
</protein>
<proteinExistence type="inferred from homology"/>
<evidence type="ECO:0000255" key="1">
    <source>
        <dbReference type="HAMAP-Rule" id="MF_01554"/>
    </source>
</evidence>
<keyword id="KW-0413">Isomerase</keyword>
<keyword id="KW-0460">Magnesium</keyword>
<keyword id="KW-0479">Metal-binding</keyword>
<keyword id="KW-0597">Phosphoprotein</keyword>
<keyword id="KW-1185">Reference proteome</keyword>
<name>GLMM_METAR</name>
<feature type="chain" id="PRO_0000337826" description="Probable phosphoglucosamine mutase">
    <location>
        <begin position="1"/>
        <end position="438"/>
    </location>
</feature>
<feature type="active site" description="Phosphoserine intermediate" evidence="1">
    <location>
        <position position="91"/>
    </location>
</feature>
<feature type="binding site" description="via phosphate group" evidence="1">
    <location>
        <position position="91"/>
    </location>
    <ligand>
        <name>Mg(2+)</name>
        <dbReference type="ChEBI" id="CHEBI:18420"/>
    </ligand>
</feature>
<feature type="binding site" evidence="1">
    <location>
        <position position="228"/>
    </location>
    <ligand>
        <name>Mg(2+)</name>
        <dbReference type="ChEBI" id="CHEBI:18420"/>
    </ligand>
</feature>
<feature type="binding site" evidence="1">
    <location>
        <position position="230"/>
    </location>
    <ligand>
        <name>Mg(2+)</name>
        <dbReference type="ChEBI" id="CHEBI:18420"/>
    </ligand>
</feature>
<feature type="binding site" evidence="1">
    <location>
        <position position="232"/>
    </location>
    <ligand>
        <name>Mg(2+)</name>
        <dbReference type="ChEBI" id="CHEBI:18420"/>
    </ligand>
</feature>
<feature type="modified residue" description="Phosphoserine" evidence="1">
    <location>
        <position position="91"/>
    </location>
</feature>
<gene>
    <name evidence="1" type="primary">glmM</name>
    <name type="synonym">pgm-1</name>
    <name type="ordered locus">UNCMA_15200</name>
    <name type="ORF">RCIX1437</name>
</gene>
<reference key="1">
    <citation type="journal article" date="2006" name="Science">
        <title>Genome of rice cluster I archaea -- the key methane producers in the rice rhizosphere.</title>
        <authorList>
            <person name="Erkel C."/>
            <person name="Kube M."/>
            <person name="Reinhardt R."/>
            <person name="Liesack W."/>
        </authorList>
    </citation>
    <scope>NUCLEOTIDE SEQUENCE [LARGE SCALE GENOMIC DNA]</scope>
    <source>
        <strain>DSM 22066 / NBRC 105507 / MRE50</strain>
    </source>
</reference>
<sequence>MALFGSSGIRGVIGSGMTPELALKAGKALGLLHKKIVIGHDPRTSSHMIEDAMVAGMLCSGARVTRIGLVSTPTLAYAARNYDCGIMITASHNPPEYNGIKFWNPDGMAFSLKQQDELERLIESDIRGVGWEYIGSESHASNAILDHIDVILRNVEKCSLKVVVDCGCGAATTITPYVLREMGCKVISLNAQPDGFFPARDPEPIDENLSELKEAVKAFDADLGIAHDGDADRMMAVDDQGRLVTGDELLAYFCRFEVKDSVVCPVDASMVVDRCKPGVKVYRTRIGDAFVSEEVRKVNADFGGETSGTWIFPRISYCPDGIYAAAKLVELVSKNGRLSKAIADLPRYPLKRGGMKFSHGNKADIMGGIRAEIEQANSRINTLDGVRVEYPEGWVLIRPSGTEPKIRITAEAVDEGAAEKLYSQAESIVKRCIDSCAQ</sequence>
<accession>Q0W4I8</accession>